<evidence type="ECO:0000255" key="1"/>
<evidence type="ECO:0000305" key="2"/>
<organism>
    <name type="scientific">Escherichia coli (strain K12)</name>
    <dbReference type="NCBI Taxonomy" id="83333"/>
    <lineage>
        <taxon>Bacteria</taxon>
        <taxon>Pseudomonadati</taxon>
        <taxon>Pseudomonadota</taxon>
        <taxon>Gammaproteobacteria</taxon>
        <taxon>Enterobacterales</taxon>
        <taxon>Enterobacteriaceae</taxon>
        <taxon>Escherichia</taxon>
    </lineage>
</organism>
<comment type="subcellular location">
    <subcellularLocation>
        <location evidence="2">Cell membrane</location>
        <topology evidence="2">Multi-pass membrane protein</topology>
    </subcellularLocation>
</comment>
<reference key="1">
    <citation type="journal article" date="1997" name="Science">
        <title>The complete genome sequence of Escherichia coli K-12.</title>
        <authorList>
            <person name="Blattner F.R."/>
            <person name="Plunkett G. III"/>
            <person name="Bloch C.A."/>
            <person name="Perna N.T."/>
            <person name="Burland V."/>
            <person name="Riley M."/>
            <person name="Collado-Vides J."/>
            <person name="Glasner J.D."/>
            <person name="Rode C.K."/>
            <person name="Mayhew G.F."/>
            <person name="Gregor J."/>
            <person name="Davis N.W."/>
            <person name="Kirkpatrick H.A."/>
            <person name="Goeden M.A."/>
            <person name="Rose D.J."/>
            <person name="Mau B."/>
            <person name="Shao Y."/>
        </authorList>
    </citation>
    <scope>NUCLEOTIDE SEQUENCE [LARGE SCALE GENOMIC DNA]</scope>
    <source>
        <strain>K12 / MG1655 / ATCC 47076</strain>
    </source>
</reference>
<reference key="2">
    <citation type="journal article" date="2006" name="Mol. Syst. Biol.">
        <title>Highly accurate genome sequences of Escherichia coli K-12 strains MG1655 and W3110.</title>
        <authorList>
            <person name="Hayashi K."/>
            <person name="Morooka N."/>
            <person name="Yamamoto Y."/>
            <person name="Fujita K."/>
            <person name="Isono K."/>
            <person name="Choi S."/>
            <person name="Ohtsubo E."/>
            <person name="Baba T."/>
            <person name="Wanner B.L."/>
            <person name="Mori H."/>
            <person name="Horiuchi T."/>
        </authorList>
    </citation>
    <scope>NUCLEOTIDE SEQUENCE [LARGE SCALE GENOMIC DNA]</scope>
    <source>
        <strain>K12 / W3110 / ATCC 27325 / DSM 5911</strain>
    </source>
</reference>
<sequence length="85" mass="9339">MIMAKLKSAKGKKFLFGLLAVFIIAASVVTRATIGGVIEQYNIPLSEWTTSMYVIQSSMIFVYSLVFTVLLAIPLGIYFLGGEEQ</sequence>
<accession>P64445</accession>
<accession>P76050</accession>
<accession>Q2MBF3</accession>
<feature type="chain" id="PRO_0000168916" description="Uncharacterized protein YnaJ">
    <location>
        <begin position="1"/>
        <end position="85"/>
    </location>
</feature>
<feature type="transmembrane region" description="Helical" evidence="1">
    <location>
        <begin position="14"/>
        <end position="34"/>
    </location>
</feature>
<feature type="transmembrane region" description="Helical" evidence="1">
    <location>
        <begin position="60"/>
        <end position="80"/>
    </location>
</feature>
<keyword id="KW-1003">Cell membrane</keyword>
<keyword id="KW-0472">Membrane</keyword>
<keyword id="KW-1185">Reference proteome</keyword>
<keyword id="KW-0812">Transmembrane</keyword>
<keyword id="KW-1133">Transmembrane helix</keyword>
<name>YNAJ_ECOLI</name>
<dbReference type="EMBL" id="U00096">
    <property type="protein sequence ID" value="AAC74414.1"/>
    <property type="molecule type" value="Genomic_DNA"/>
</dbReference>
<dbReference type="EMBL" id="AP009048">
    <property type="protein sequence ID" value="BAE76403.1"/>
    <property type="molecule type" value="Genomic_DNA"/>
</dbReference>
<dbReference type="PIR" id="G64882">
    <property type="entry name" value="G64882"/>
</dbReference>
<dbReference type="RefSeq" id="NP_415848.1">
    <property type="nucleotide sequence ID" value="NC_000913.3"/>
</dbReference>
<dbReference type="RefSeq" id="WP_000605090.1">
    <property type="nucleotide sequence ID" value="NZ_STEB01000005.1"/>
</dbReference>
<dbReference type="SMR" id="P64445"/>
<dbReference type="BioGRID" id="4259557">
    <property type="interactions" value="113"/>
</dbReference>
<dbReference type="FunCoup" id="P64445">
    <property type="interactions" value="39"/>
</dbReference>
<dbReference type="STRING" id="511145.b1332"/>
<dbReference type="PaxDb" id="511145-b1332"/>
<dbReference type="EnsemblBacteria" id="AAC74414">
    <property type="protein sequence ID" value="AAC74414"/>
    <property type="gene ID" value="b1332"/>
</dbReference>
<dbReference type="GeneID" id="945901"/>
<dbReference type="KEGG" id="ecj:JW1326"/>
<dbReference type="KEGG" id="eco:b1332"/>
<dbReference type="KEGG" id="ecoc:C3026_07800"/>
<dbReference type="PATRIC" id="fig|1411691.4.peg.945"/>
<dbReference type="EchoBASE" id="EB4042"/>
<dbReference type="eggNOG" id="COG3182">
    <property type="taxonomic scope" value="Bacteria"/>
</dbReference>
<dbReference type="HOGENOM" id="CLU_168864_0_0_6"/>
<dbReference type="InParanoid" id="P64445"/>
<dbReference type="OMA" id="QSAMICV"/>
<dbReference type="OrthoDB" id="6555993at2"/>
<dbReference type="PhylomeDB" id="P64445"/>
<dbReference type="BioCyc" id="EcoCyc:G6668-MONOMER"/>
<dbReference type="PRO" id="PR:P64445"/>
<dbReference type="Proteomes" id="UP000000625">
    <property type="component" value="Chromosome"/>
</dbReference>
<dbReference type="GO" id="GO:0005886">
    <property type="term" value="C:plasma membrane"/>
    <property type="evidence" value="ECO:0007669"/>
    <property type="project" value="UniProtKB-SubCell"/>
</dbReference>
<dbReference type="InterPro" id="IPR019685">
    <property type="entry name" value="DUF2534"/>
</dbReference>
<dbReference type="Pfam" id="PF10749">
    <property type="entry name" value="DUF2534"/>
    <property type="match status" value="1"/>
</dbReference>
<gene>
    <name type="primary">ynaJ</name>
    <name type="ordered locus">b1332</name>
    <name type="ordered locus">JW1326</name>
</gene>
<proteinExistence type="predicted"/>
<protein>
    <recommendedName>
        <fullName>Uncharacterized protein YnaJ</fullName>
    </recommendedName>
</protein>